<gene>
    <name type="primary">RUB1</name>
    <name type="synonym">NEDD8</name>
    <name type="synonym">UBQ4</name>
    <name type="ordered locus">Os09g0420800</name>
    <name type="ordered locus">LOC_Os09g25320</name>
    <name type="ORF">OJ1740_D06.1</name>
    <name type="ORF">P0668D04.32</name>
</gene>
<proteinExistence type="evidence at transcript level"/>
<protein>
    <recommendedName>
        <fullName>Ubiquitin-NEDD8-like protein RUB1</fullName>
    </recommendedName>
    <component>
        <recommendedName>
            <fullName>Ubiquitin</fullName>
        </recommendedName>
    </component>
    <component>
        <recommendedName>
            <fullName>NEDD8-like protein RUB1</fullName>
        </recommendedName>
        <alternativeName>
            <fullName>OsRUB1</fullName>
        </alternativeName>
        <alternativeName>
            <fullName>Ubiquitin-related protein 1</fullName>
        </alternativeName>
    </component>
</protein>
<name>RUB1_ORYSJ</name>
<organism>
    <name type="scientific">Oryza sativa subsp. japonica</name>
    <name type="common">Rice</name>
    <dbReference type="NCBI Taxonomy" id="39947"/>
    <lineage>
        <taxon>Eukaryota</taxon>
        <taxon>Viridiplantae</taxon>
        <taxon>Streptophyta</taxon>
        <taxon>Embryophyta</taxon>
        <taxon>Tracheophyta</taxon>
        <taxon>Spermatophyta</taxon>
        <taxon>Magnoliopsida</taxon>
        <taxon>Liliopsida</taxon>
        <taxon>Poales</taxon>
        <taxon>Poaceae</taxon>
        <taxon>BOP clade</taxon>
        <taxon>Oryzoideae</taxon>
        <taxon>Oryzeae</taxon>
        <taxon>Oryzinae</taxon>
        <taxon>Oryza</taxon>
        <taxon>Oryza sativa</taxon>
    </lineage>
</organism>
<keyword id="KW-0963">Cytoplasm</keyword>
<keyword id="KW-1017">Isopeptide bond</keyword>
<keyword id="KW-0539">Nucleus</keyword>
<keyword id="KW-1185">Reference proteome</keyword>
<keyword id="KW-0677">Repeat</keyword>
<keyword id="KW-0832">Ubl conjugation</keyword>
<keyword id="KW-0833">Ubl conjugation pathway</keyword>
<dbReference type="EMBL" id="AP005426">
    <property type="protein sequence ID" value="BAD33498.1"/>
    <property type="molecule type" value="Genomic_DNA"/>
</dbReference>
<dbReference type="EMBL" id="AP005579">
    <property type="protein sequence ID" value="BAD33626.1"/>
    <property type="molecule type" value="Genomic_DNA"/>
</dbReference>
<dbReference type="EMBL" id="AP008215">
    <property type="protein sequence ID" value="BAF25113.1"/>
    <property type="molecule type" value="Genomic_DNA"/>
</dbReference>
<dbReference type="EMBL" id="AP014965">
    <property type="protein sequence ID" value="BAT08123.1"/>
    <property type="molecule type" value="Genomic_DNA"/>
</dbReference>
<dbReference type="EMBL" id="AK099513">
    <property type="protein sequence ID" value="BAG94169.1"/>
    <property type="molecule type" value="mRNA"/>
</dbReference>
<dbReference type="RefSeq" id="XP_015611997.1">
    <property type="nucleotide sequence ID" value="XM_015756511.1"/>
</dbReference>
<dbReference type="SMR" id="P0C030"/>
<dbReference type="FunCoup" id="P0C030">
    <property type="interactions" value="101"/>
</dbReference>
<dbReference type="STRING" id="39947.P0C030"/>
<dbReference type="PaxDb" id="39947-P0C030"/>
<dbReference type="EnsemblPlants" id="Os09t0420800-01">
    <property type="protein sequence ID" value="Os09t0420800-01"/>
    <property type="gene ID" value="Os09g0420800"/>
</dbReference>
<dbReference type="Gramene" id="Os09t0420800-01">
    <property type="protein sequence ID" value="Os09t0420800-01"/>
    <property type="gene ID" value="Os09g0420800"/>
</dbReference>
<dbReference type="KEGG" id="dosa:Os09g0420800"/>
<dbReference type="eggNOG" id="KOG0001">
    <property type="taxonomic scope" value="Eukaryota"/>
</dbReference>
<dbReference type="HOGENOM" id="CLU_010412_0_0_1"/>
<dbReference type="InParanoid" id="P0C030"/>
<dbReference type="OMA" id="MMADYGI"/>
<dbReference type="OrthoDB" id="1649877at2759"/>
<dbReference type="Proteomes" id="UP000000763">
    <property type="component" value="Chromosome 9"/>
</dbReference>
<dbReference type="Proteomes" id="UP000059680">
    <property type="component" value="Chromosome 9"/>
</dbReference>
<dbReference type="GO" id="GO:0005737">
    <property type="term" value="C:cytoplasm"/>
    <property type="evidence" value="ECO:0000318"/>
    <property type="project" value="GO_Central"/>
</dbReference>
<dbReference type="GO" id="GO:0005634">
    <property type="term" value="C:nucleus"/>
    <property type="evidence" value="ECO:0000318"/>
    <property type="project" value="GO_Central"/>
</dbReference>
<dbReference type="GO" id="GO:0003729">
    <property type="term" value="F:mRNA binding"/>
    <property type="evidence" value="ECO:0007669"/>
    <property type="project" value="UniProtKB-ARBA"/>
</dbReference>
<dbReference type="GO" id="GO:0031386">
    <property type="term" value="F:protein tag activity"/>
    <property type="evidence" value="ECO:0000318"/>
    <property type="project" value="GO_Central"/>
</dbReference>
<dbReference type="GO" id="GO:0031625">
    <property type="term" value="F:ubiquitin protein ligase binding"/>
    <property type="evidence" value="ECO:0000318"/>
    <property type="project" value="GO_Central"/>
</dbReference>
<dbReference type="GO" id="GO:0019941">
    <property type="term" value="P:modification-dependent protein catabolic process"/>
    <property type="evidence" value="ECO:0000318"/>
    <property type="project" value="GO_Central"/>
</dbReference>
<dbReference type="GO" id="GO:0016567">
    <property type="term" value="P:protein ubiquitination"/>
    <property type="evidence" value="ECO:0000318"/>
    <property type="project" value="GO_Central"/>
</dbReference>
<dbReference type="CDD" id="cd01806">
    <property type="entry name" value="Ubl_NEDD8"/>
    <property type="match status" value="1"/>
</dbReference>
<dbReference type="CDD" id="cd01803">
    <property type="entry name" value="Ubl_ubiquitin"/>
    <property type="match status" value="1"/>
</dbReference>
<dbReference type="FunFam" id="3.10.20.90:FF:000023">
    <property type="entry name" value="NEDD8 protein"/>
    <property type="match status" value="1"/>
</dbReference>
<dbReference type="FunFam" id="3.10.20.90:FF:000016">
    <property type="entry name" value="Polyubiquitin 3"/>
    <property type="match status" value="1"/>
</dbReference>
<dbReference type="Gene3D" id="3.10.20.90">
    <property type="entry name" value="Phosphatidylinositol 3-kinase Catalytic Subunit, Chain A, domain 1"/>
    <property type="match status" value="2"/>
</dbReference>
<dbReference type="InterPro" id="IPR038738">
    <property type="entry name" value="Nedd8-like"/>
</dbReference>
<dbReference type="InterPro" id="IPR000626">
    <property type="entry name" value="Ubiquitin-like_dom"/>
</dbReference>
<dbReference type="InterPro" id="IPR029071">
    <property type="entry name" value="Ubiquitin-like_domsf"/>
</dbReference>
<dbReference type="InterPro" id="IPR019954">
    <property type="entry name" value="Ubiquitin_CS"/>
</dbReference>
<dbReference type="InterPro" id="IPR019956">
    <property type="entry name" value="Ubiquitin_dom"/>
</dbReference>
<dbReference type="InterPro" id="IPR050158">
    <property type="entry name" value="Ubiquitin_ubiquitin-like"/>
</dbReference>
<dbReference type="PANTHER" id="PTHR10666">
    <property type="entry name" value="UBIQUITIN"/>
    <property type="match status" value="1"/>
</dbReference>
<dbReference type="Pfam" id="PF00240">
    <property type="entry name" value="ubiquitin"/>
    <property type="match status" value="2"/>
</dbReference>
<dbReference type="PRINTS" id="PR00348">
    <property type="entry name" value="UBIQUITIN"/>
</dbReference>
<dbReference type="SMART" id="SM00213">
    <property type="entry name" value="UBQ"/>
    <property type="match status" value="2"/>
</dbReference>
<dbReference type="SUPFAM" id="SSF54236">
    <property type="entry name" value="Ubiquitin-like"/>
    <property type="match status" value="2"/>
</dbReference>
<dbReference type="PROSITE" id="PS00299">
    <property type="entry name" value="UBIQUITIN_1"/>
    <property type="match status" value="2"/>
</dbReference>
<dbReference type="PROSITE" id="PS50053">
    <property type="entry name" value="UBIQUITIN_2"/>
    <property type="match status" value="2"/>
</dbReference>
<feature type="chain" id="PRO_0000396913" description="Ubiquitin">
    <location>
        <begin position="1"/>
        <end position="76"/>
    </location>
</feature>
<feature type="chain" id="PRO_0000035973" description="NEDD8-like protein RUB1">
    <location>
        <begin position="77"/>
        <end position="152"/>
    </location>
</feature>
<feature type="propeptide" id="PRO_0000035974" evidence="3">
    <location>
        <position position="153"/>
    </location>
</feature>
<feature type="domain" description="Ubiquitin-like 1" evidence="2">
    <location>
        <begin position="1"/>
        <end position="76"/>
    </location>
</feature>
<feature type="domain" description="Ubiquitin-like 2" evidence="2">
    <location>
        <begin position="77"/>
        <end position="152"/>
    </location>
</feature>
<feature type="cross-link" description="Glycyl lysine isopeptide (Lys-Gly) (interchain with G-Cter in ubiquitin)" evidence="1">
    <location>
        <position position="48"/>
    </location>
</feature>
<feature type="cross-link" description="Glycyl lysine isopeptide (Lys-Gly) (interchain with G-Cter in ubiquitin)" evidence="1">
    <location>
        <position position="63"/>
    </location>
</feature>
<feature type="cross-link" description="Glycyl lysine isopeptide (Gly-Lys) (interchain with K-? in acceptor proteins)" evidence="2">
    <location>
        <position position="76"/>
    </location>
</feature>
<feature type="cross-link" description="Glycyl lysine isopeptide (Gly-Lys) (interchain with K-? in acceptor proteins)" evidence="2">
    <location>
        <position position="152"/>
    </location>
</feature>
<evidence type="ECO:0000250" key="1"/>
<evidence type="ECO:0000255" key="2">
    <source>
        <dbReference type="PROSITE-ProRule" id="PRU00214"/>
    </source>
</evidence>
<evidence type="ECO:0000305" key="3"/>
<comment type="function">
    <text evidence="1">Ubiquitin exists either covalently attached to another protein, or free (unanchored). When covalently bound, it is conjugated to target proteins via an isopeptide bond either as a monomer (monoubiquitin), a polymer linked via different Lys residues of the ubiquitin (polyubiquitin chains) or a linear polymer linked via the initiator Met of the ubiquitin (linear polyubiquitin chains). Polyubiquitin chains, when attached to a target protein, have different functions depending on the Lys residue of the ubiquitin that is linked: Lys-48-linked is involved in protein degradation via the proteasome; Lys-63-linked is involved in endocytosis, and DNA-damage responses. Linear polymer chains formed via attachment by the initiator Met lead to cell signaling. Ubiquitin is usually conjugated to Lys residues of target proteins, however, in rare cases, conjugation to Cys or Ser residues has been observed. When polyubiquitin is free (unanchored-polyubiquitin), it also has distinct roles, such as in activation of protein kinases, and in signaling (By similarity).</text>
</comment>
<comment type="function">
    <molecule>NEDD8-like protein RUB1</molecule>
    <text>Appears to function as a stable post-translational protein modifier.</text>
</comment>
<comment type="subcellular location">
    <molecule>Ubiquitin</molecule>
    <subcellularLocation>
        <location evidence="1">Cytoplasm</location>
    </subcellularLocation>
    <subcellularLocation>
        <location evidence="1">Nucleus</location>
    </subcellularLocation>
</comment>
<comment type="miscellaneous">
    <text>Ubiquitin is generally synthesized as a polyubiquitin precursor with tandem head to tail repeats. Often, there is one to three additional amino acids after the last repeat, removed in the mature protein. Alternatively, ubiquitin extension protein is synthesized as a single copy of ubiquitin fused to a ribosomal protein (either L40 or S27A) or to an ubiquitin-related protein (either RUB1 or RUB2). Following translation, extension protein is cleaved from ubiquitin.</text>
</comment>
<comment type="similarity">
    <text evidence="3">Belongs to the ubiquitin family.</text>
</comment>
<sequence length="153" mass="17130">MQIFVKTLTGKTITLEVESSDTIDNVKAKIQDKEGIPPDQQRLIFAGKQLEDGRTLADYNIQKESTLHLVLRLRGGTMIKVKTLTGKEIEIDIEPTDTIDRIKERVEEKEGIPPVQQRLIYAGKQLADDKTAKDYNIEGGSVLHLVLALRGGY</sequence>
<accession>P0C030</accession>
<accession>O82079</accession>
<accession>P03993</accession>
<accession>P69321</accession>
<accession>Q0J1Q2</accession>
<accession>Q652Q2</accession>
<accession>Q67UR4</accession>
<accession>Q69P70</accession>
<accession>Q6ATC2</accession>
<accession>Q7XN78</accession>
<accession>Q8S5Y3</accession>
<accession>Q9AR09</accession>
<reference key="1">
    <citation type="journal article" date="2005" name="Nature">
        <title>The map-based sequence of the rice genome.</title>
        <authorList>
            <consortium name="International rice genome sequencing project (IRGSP)"/>
        </authorList>
    </citation>
    <scope>NUCLEOTIDE SEQUENCE [LARGE SCALE GENOMIC DNA]</scope>
    <source>
        <strain>cv. Nipponbare</strain>
    </source>
</reference>
<reference key="2">
    <citation type="journal article" date="2008" name="Nucleic Acids Res.">
        <title>The rice annotation project database (RAP-DB): 2008 update.</title>
        <authorList>
            <consortium name="The rice annotation project (RAP)"/>
        </authorList>
    </citation>
    <scope>GENOME REANNOTATION</scope>
    <source>
        <strain>cv. Nipponbare</strain>
    </source>
</reference>
<reference key="3">
    <citation type="journal article" date="2013" name="Rice">
        <title>Improvement of the Oryza sativa Nipponbare reference genome using next generation sequence and optical map data.</title>
        <authorList>
            <person name="Kawahara Y."/>
            <person name="de la Bastide M."/>
            <person name="Hamilton J.P."/>
            <person name="Kanamori H."/>
            <person name="McCombie W.R."/>
            <person name="Ouyang S."/>
            <person name="Schwartz D.C."/>
            <person name="Tanaka T."/>
            <person name="Wu J."/>
            <person name="Zhou S."/>
            <person name="Childs K.L."/>
            <person name="Davidson R.M."/>
            <person name="Lin H."/>
            <person name="Quesada-Ocampo L."/>
            <person name="Vaillancourt B."/>
            <person name="Sakai H."/>
            <person name="Lee S.S."/>
            <person name="Kim J."/>
            <person name="Numa H."/>
            <person name="Itoh T."/>
            <person name="Buell C.R."/>
            <person name="Matsumoto T."/>
        </authorList>
    </citation>
    <scope>GENOME REANNOTATION</scope>
    <source>
        <strain>cv. Nipponbare</strain>
    </source>
</reference>
<reference key="4">
    <citation type="journal article" date="2003" name="Science">
        <title>Collection, mapping, and annotation of over 28,000 cDNA clones from japonica rice.</title>
        <authorList>
            <consortium name="The rice full-length cDNA consortium"/>
        </authorList>
    </citation>
    <scope>NUCLEOTIDE SEQUENCE [LARGE SCALE MRNA]</scope>
    <source>
        <strain>cv. Nipponbare</strain>
    </source>
</reference>